<feature type="chain" id="PRO_0000064531" description="A-kinase anchor protein 6">
    <location>
        <begin position="1"/>
        <end position="2314"/>
    </location>
</feature>
<feature type="repeat" description="Spectrin 1">
    <location>
        <begin position="768"/>
        <end position="847"/>
    </location>
</feature>
<feature type="repeat" description="Spectrin 2">
    <location>
        <begin position="1033"/>
        <end position="1148"/>
    </location>
</feature>
<feature type="region of interest" description="Disordered" evidence="3">
    <location>
        <begin position="1"/>
        <end position="25"/>
    </location>
</feature>
<feature type="region of interest" description="Disordered" evidence="3">
    <location>
        <begin position="285"/>
        <end position="432"/>
    </location>
</feature>
<feature type="region of interest" description="Disordered" evidence="3">
    <location>
        <begin position="505"/>
        <end position="613"/>
    </location>
</feature>
<feature type="region of interest" description="Disordered" evidence="3">
    <location>
        <begin position="736"/>
        <end position="755"/>
    </location>
</feature>
<feature type="region of interest" description="Disordered" evidence="3">
    <location>
        <begin position="1349"/>
        <end position="1401"/>
    </location>
</feature>
<feature type="region of interest" description="Disordered" evidence="3">
    <location>
        <begin position="1816"/>
        <end position="1838"/>
    </location>
</feature>
<feature type="region of interest" description="Disordered" evidence="3">
    <location>
        <begin position="1854"/>
        <end position="1926"/>
    </location>
</feature>
<feature type="region of interest" description="Disordered" evidence="3">
    <location>
        <begin position="1940"/>
        <end position="2012"/>
    </location>
</feature>
<feature type="region of interest" description="PKA-RII subunit binding domain">
    <location>
        <begin position="2062"/>
        <end position="2075"/>
    </location>
</feature>
<feature type="region of interest" description="Disordered" evidence="3">
    <location>
        <begin position="2166"/>
        <end position="2286"/>
    </location>
</feature>
<feature type="compositionally biased region" description="Polar residues" evidence="3">
    <location>
        <begin position="1"/>
        <end position="12"/>
    </location>
</feature>
<feature type="compositionally biased region" description="Basic and acidic residues" evidence="3">
    <location>
        <begin position="301"/>
        <end position="311"/>
    </location>
</feature>
<feature type="compositionally biased region" description="Polar residues" evidence="3">
    <location>
        <begin position="319"/>
        <end position="330"/>
    </location>
</feature>
<feature type="compositionally biased region" description="Basic and acidic residues" evidence="3">
    <location>
        <begin position="398"/>
        <end position="420"/>
    </location>
</feature>
<feature type="compositionally biased region" description="Low complexity" evidence="3">
    <location>
        <begin position="569"/>
        <end position="592"/>
    </location>
</feature>
<feature type="compositionally biased region" description="Basic and acidic residues" evidence="3">
    <location>
        <begin position="736"/>
        <end position="753"/>
    </location>
</feature>
<feature type="compositionally biased region" description="Polar residues" evidence="3">
    <location>
        <begin position="1353"/>
        <end position="1363"/>
    </location>
</feature>
<feature type="compositionally biased region" description="Basic and acidic residues" evidence="3">
    <location>
        <begin position="1816"/>
        <end position="1831"/>
    </location>
</feature>
<feature type="compositionally biased region" description="Basic and acidic residues" evidence="3">
    <location>
        <begin position="1874"/>
        <end position="1891"/>
    </location>
</feature>
<feature type="compositionally biased region" description="Polar residues" evidence="3">
    <location>
        <begin position="1917"/>
        <end position="1926"/>
    </location>
</feature>
<feature type="compositionally biased region" description="Basic and acidic residues" evidence="3">
    <location>
        <begin position="1944"/>
        <end position="1958"/>
    </location>
</feature>
<feature type="compositionally biased region" description="Basic and acidic residues" evidence="3">
    <location>
        <begin position="2215"/>
        <end position="2226"/>
    </location>
</feature>
<feature type="compositionally biased region" description="Polar residues" evidence="3">
    <location>
        <begin position="2227"/>
        <end position="2243"/>
    </location>
</feature>
<feature type="modified residue" description="Phosphoserine" evidence="4">
    <location>
        <position position="1072"/>
    </location>
</feature>
<feature type="modified residue" description="Phosphoserine" evidence="4">
    <location>
        <position position="1568"/>
    </location>
</feature>
<feature type="modified residue" description="Phosphoserine" evidence="4">
    <location>
        <position position="1593"/>
    </location>
</feature>
<proteinExistence type="evidence at protein level"/>
<accession>Q9WVC7</accession>
<dbReference type="EMBL" id="AF139518">
    <property type="protein sequence ID" value="AAD39150.1"/>
    <property type="molecule type" value="mRNA"/>
</dbReference>
<dbReference type="RefSeq" id="NP_072140.1">
    <property type="nucleotide sequence ID" value="NM_022618.1"/>
</dbReference>
<dbReference type="BioGRID" id="249134">
    <property type="interactions" value="4"/>
</dbReference>
<dbReference type="CORUM" id="Q9WVC7"/>
<dbReference type="FunCoup" id="Q9WVC7">
    <property type="interactions" value="722"/>
</dbReference>
<dbReference type="IntAct" id="Q9WVC7">
    <property type="interactions" value="3"/>
</dbReference>
<dbReference type="MINT" id="Q9WVC7"/>
<dbReference type="STRING" id="10116.ENSRNOP00000006562"/>
<dbReference type="iPTMnet" id="Q9WVC7"/>
<dbReference type="PhosphoSitePlus" id="Q9WVC7"/>
<dbReference type="PaxDb" id="10116-ENSRNOP00000006562"/>
<dbReference type="GeneID" id="64553"/>
<dbReference type="KEGG" id="rno:64553"/>
<dbReference type="UCSC" id="RGD:69412">
    <property type="organism name" value="rat"/>
</dbReference>
<dbReference type="AGR" id="RGD:69412"/>
<dbReference type="CTD" id="9472"/>
<dbReference type="RGD" id="69412">
    <property type="gene designation" value="Akap6"/>
</dbReference>
<dbReference type="eggNOG" id="ENOG502QSMH">
    <property type="taxonomic scope" value="Eukaryota"/>
</dbReference>
<dbReference type="InParanoid" id="Q9WVC7"/>
<dbReference type="PRO" id="PR:Q9WVC7"/>
<dbReference type="Proteomes" id="UP000002494">
    <property type="component" value="Unplaced"/>
</dbReference>
<dbReference type="GO" id="GO:0034704">
    <property type="term" value="C:calcium channel complex"/>
    <property type="evidence" value="ECO:0000266"/>
    <property type="project" value="RGD"/>
</dbReference>
<dbReference type="GO" id="GO:0005901">
    <property type="term" value="C:caveola"/>
    <property type="evidence" value="ECO:0000314"/>
    <property type="project" value="RGD"/>
</dbReference>
<dbReference type="GO" id="GO:0005737">
    <property type="term" value="C:cytoplasm"/>
    <property type="evidence" value="ECO:0000314"/>
    <property type="project" value="BHF-UCL"/>
</dbReference>
<dbReference type="GO" id="GO:0014704">
    <property type="term" value="C:intercalated disc"/>
    <property type="evidence" value="ECO:0000314"/>
    <property type="project" value="BHF-UCL"/>
</dbReference>
<dbReference type="GO" id="GO:0014701">
    <property type="term" value="C:junctional sarcoplasmic reticulum membrane"/>
    <property type="evidence" value="ECO:0000314"/>
    <property type="project" value="BHF-UCL"/>
</dbReference>
<dbReference type="GO" id="GO:0005635">
    <property type="term" value="C:nuclear envelope"/>
    <property type="evidence" value="ECO:0000314"/>
    <property type="project" value="MGI"/>
</dbReference>
<dbReference type="GO" id="GO:0031965">
    <property type="term" value="C:nuclear membrane"/>
    <property type="evidence" value="ECO:0000314"/>
    <property type="project" value="RGD"/>
</dbReference>
<dbReference type="GO" id="GO:0005634">
    <property type="term" value="C:nucleus"/>
    <property type="evidence" value="ECO:0000314"/>
    <property type="project" value="BHF-UCL"/>
</dbReference>
<dbReference type="GO" id="GO:0048471">
    <property type="term" value="C:perinuclear region of cytoplasm"/>
    <property type="evidence" value="ECO:0000314"/>
    <property type="project" value="BHF-UCL"/>
</dbReference>
<dbReference type="GO" id="GO:0032991">
    <property type="term" value="C:protein-containing complex"/>
    <property type="evidence" value="ECO:0000314"/>
    <property type="project" value="RGD"/>
</dbReference>
<dbReference type="GO" id="GO:0042383">
    <property type="term" value="C:sarcolemma"/>
    <property type="evidence" value="ECO:0000314"/>
    <property type="project" value="BHF-UCL"/>
</dbReference>
<dbReference type="GO" id="GO:0016529">
    <property type="term" value="C:sarcoplasmic reticulum"/>
    <property type="evidence" value="ECO:0000314"/>
    <property type="project" value="MGI"/>
</dbReference>
<dbReference type="GO" id="GO:0030315">
    <property type="term" value="C:T-tubule"/>
    <property type="evidence" value="ECO:0000314"/>
    <property type="project" value="BHF-UCL"/>
</dbReference>
<dbReference type="GO" id="GO:0008179">
    <property type="term" value="F:adenylate cyclase binding"/>
    <property type="evidence" value="ECO:0000314"/>
    <property type="project" value="BHF-UCL"/>
</dbReference>
<dbReference type="GO" id="GO:0019899">
    <property type="term" value="F:enzyme binding"/>
    <property type="evidence" value="ECO:0000353"/>
    <property type="project" value="BHF-UCL"/>
</dbReference>
<dbReference type="GO" id="GO:0060090">
    <property type="term" value="F:molecular adaptor activity"/>
    <property type="evidence" value="ECO:0000314"/>
    <property type="project" value="BHF-UCL"/>
</dbReference>
<dbReference type="GO" id="GO:0051018">
    <property type="term" value="F:protein kinase A binding"/>
    <property type="evidence" value="ECO:0000314"/>
    <property type="project" value="MGI"/>
</dbReference>
<dbReference type="GO" id="GO:0034237">
    <property type="term" value="F:protein kinase A regulatory subunit binding"/>
    <property type="evidence" value="ECO:0000314"/>
    <property type="project" value="BHF-UCL"/>
</dbReference>
<dbReference type="GO" id="GO:0051721">
    <property type="term" value="F:protein phosphatase 2A binding"/>
    <property type="evidence" value="ECO:0000314"/>
    <property type="project" value="BHF-UCL"/>
</dbReference>
<dbReference type="GO" id="GO:0043495">
    <property type="term" value="F:protein-membrane adaptor activity"/>
    <property type="evidence" value="ECO:0000314"/>
    <property type="project" value="BHF-UCL"/>
</dbReference>
<dbReference type="GO" id="GO:0044325">
    <property type="term" value="F:transmembrane transporter binding"/>
    <property type="evidence" value="ECO:0000314"/>
    <property type="project" value="BHF-UCL"/>
</dbReference>
<dbReference type="GO" id="GO:0001508">
    <property type="term" value="P:action potential"/>
    <property type="evidence" value="ECO:0000266"/>
    <property type="project" value="RGD"/>
</dbReference>
<dbReference type="GO" id="GO:0071320">
    <property type="term" value="P:cellular response to cAMP"/>
    <property type="evidence" value="ECO:0000266"/>
    <property type="project" value="RGD"/>
</dbReference>
<dbReference type="GO" id="GO:0071345">
    <property type="term" value="P:cellular response to cytokine stimulus"/>
    <property type="evidence" value="ECO:0000315"/>
    <property type="project" value="BHF-UCL"/>
</dbReference>
<dbReference type="GO" id="GO:0071872">
    <property type="term" value="P:cellular response to epinephrine stimulus"/>
    <property type="evidence" value="ECO:0000315"/>
    <property type="project" value="BHF-UCL"/>
</dbReference>
<dbReference type="GO" id="GO:0070886">
    <property type="term" value="P:positive regulation of calcineurin-NFAT signaling cascade"/>
    <property type="evidence" value="ECO:0000315"/>
    <property type="project" value="BHF-UCL"/>
</dbReference>
<dbReference type="GO" id="GO:0030307">
    <property type="term" value="P:positive regulation of cell growth"/>
    <property type="evidence" value="ECO:0000315"/>
    <property type="project" value="BHF-UCL"/>
</dbReference>
<dbReference type="GO" id="GO:0061051">
    <property type="term" value="P:positive regulation of cell growth involved in cardiac muscle cell development"/>
    <property type="evidence" value="ECO:0000314"/>
    <property type="project" value="RGD"/>
</dbReference>
<dbReference type="GO" id="GO:1901381">
    <property type="term" value="P:positive regulation of potassium ion transmembrane transport"/>
    <property type="evidence" value="ECO:0000266"/>
    <property type="project" value="RGD"/>
</dbReference>
<dbReference type="GO" id="GO:0010739">
    <property type="term" value="P:positive regulation of protein kinase A signaling"/>
    <property type="evidence" value="ECO:0000315"/>
    <property type="project" value="BHF-UCL"/>
</dbReference>
<dbReference type="GO" id="GO:0051281">
    <property type="term" value="P:positive regulation of release of sequestered calcium ion into cytosol"/>
    <property type="evidence" value="ECO:0000315"/>
    <property type="project" value="BHF-UCL"/>
</dbReference>
<dbReference type="GO" id="GO:0045727">
    <property type="term" value="P:positive regulation of translation"/>
    <property type="evidence" value="ECO:0000315"/>
    <property type="project" value="RGD"/>
</dbReference>
<dbReference type="GO" id="GO:0031503">
    <property type="term" value="P:protein-containing complex localization"/>
    <property type="evidence" value="ECO:0000315"/>
    <property type="project" value="BHF-UCL"/>
</dbReference>
<dbReference type="GO" id="GO:0141161">
    <property type="term" value="P:regulation of cAMP/PKA signal transduction"/>
    <property type="evidence" value="ECO:0000314"/>
    <property type="project" value="BHF-UCL"/>
</dbReference>
<dbReference type="GO" id="GO:0086004">
    <property type="term" value="P:regulation of cardiac muscle cell contraction"/>
    <property type="evidence" value="ECO:0000315"/>
    <property type="project" value="BHF-UCL"/>
</dbReference>
<dbReference type="GO" id="GO:0060306">
    <property type="term" value="P:regulation of membrane repolarization"/>
    <property type="evidence" value="ECO:0000266"/>
    <property type="project" value="RGD"/>
</dbReference>
<dbReference type="GO" id="GO:1901897">
    <property type="term" value="P:regulation of relaxation of cardiac muscle"/>
    <property type="evidence" value="ECO:0000315"/>
    <property type="project" value="BHF-UCL"/>
</dbReference>
<dbReference type="GO" id="GO:0010880">
    <property type="term" value="P:regulation of release of sequestered calcium ion into cytosol by sarcoplasmic reticulum"/>
    <property type="evidence" value="ECO:0000315"/>
    <property type="project" value="BHF-UCL"/>
</dbReference>
<dbReference type="CDD" id="cd00176">
    <property type="entry name" value="SPEC"/>
    <property type="match status" value="1"/>
</dbReference>
<dbReference type="FunFam" id="1.20.58.60:FF:000113">
    <property type="entry name" value="A-kinase anchor protein 6"/>
    <property type="match status" value="1"/>
</dbReference>
<dbReference type="FunFam" id="1.20.58.60:FF:000117">
    <property type="entry name" value="A-kinase anchor protein 6"/>
    <property type="match status" value="1"/>
</dbReference>
<dbReference type="Gene3D" id="1.20.58.60">
    <property type="match status" value="3"/>
</dbReference>
<dbReference type="InterPro" id="IPR018159">
    <property type="entry name" value="Spectrin/alpha-actinin"/>
</dbReference>
<dbReference type="InterPro" id="IPR002017">
    <property type="entry name" value="Spectrin_repeat"/>
</dbReference>
<dbReference type="PANTHER" id="PTHR14514:SF2">
    <property type="entry name" value="A-KINASE ANCHOR PROTEIN 6"/>
    <property type="match status" value="1"/>
</dbReference>
<dbReference type="PANTHER" id="PTHR14514">
    <property type="entry name" value="PKA ANCHORING PROTEIN"/>
    <property type="match status" value="1"/>
</dbReference>
<dbReference type="Pfam" id="PF00435">
    <property type="entry name" value="Spectrin"/>
    <property type="match status" value="1"/>
</dbReference>
<dbReference type="SMART" id="SM00150">
    <property type="entry name" value="SPEC"/>
    <property type="match status" value="3"/>
</dbReference>
<dbReference type="SUPFAM" id="SSF46966">
    <property type="entry name" value="Spectrin repeat"/>
    <property type="match status" value="3"/>
</dbReference>
<comment type="function">
    <text evidence="1">Binds to type II regulatory subunits of protein kinase A and anchors/targets them to the nuclear membrane or sarcoplasmic reticulum. May act as an adapter for assembling multiprotein complexes (By similarity).</text>
</comment>
<comment type="subunit">
    <text evidence="1 2">Interacts with RII subunit of PKA, phosphatase 2B (calcineurin) and AKAP79. Interacts with SYNPO2.</text>
</comment>
<comment type="interaction">
    <interactant intactId="EBI-7559840">
        <id>Q9WVC7</id>
    </interactant>
    <interactant intactId="EBI-7400670">
        <id>P20651</id>
        <label>Ppp3cb</label>
    </interactant>
    <organismsDiffer>false</organismsDiffer>
    <experiments>2</experiments>
</comment>
<comment type="interaction">
    <interactant intactId="EBI-7559840">
        <id>Q9WVC7</id>
    </interactant>
    <interactant intactId="EBI-642618">
        <id>P48453</id>
        <label>Ppp3cb</label>
    </interactant>
    <organismsDiffer>true</organismsDiffer>
    <experiments>2</experiments>
</comment>
<comment type="subcellular location">
    <subcellularLocation>
        <location>Sarcoplasmic reticulum</location>
    </subcellularLocation>
    <subcellularLocation>
        <location>Nucleus membrane</location>
    </subcellularLocation>
    <text>In heart muscle. Participation of multiple targeting signals allow correct intracellular targeting. These may be repeated motifs rich in basic and hydrophobic amino acids, palmitoylated/myristoylated motifs or alternatively splice targeting sequences.</text>
</comment>
<comment type="domain">
    <text>RII-alpha binding site, predicted to form an amphipathic helix, could participate in protein-protein interactions with a complementary surface on the R-subunit dimer.</text>
</comment>
<keyword id="KW-0472">Membrane</keyword>
<keyword id="KW-0539">Nucleus</keyword>
<keyword id="KW-0597">Phosphoprotein</keyword>
<keyword id="KW-1185">Reference proteome</keyword>
<keyword id="KW-0677">Repeat</keyword>
<keyword id="KW-0703">Sarcoplasmic reticulum</keyword>
<protein>
    <recommendedName>
        <fullName>A-kinase anchor protein 6</fullName>
        <shortName>AKAP-6</shortName>
    </recommendedName>
    <alternativeName>
        <fullName>Protein kinase A-anchoring protein 6</fullName>
        <shortName>PRKA6</shortName>
    </alternativeName>
    <alternativeName>
        <fullName>mAKAP</fullName>
    </alternativeName>
</protein>
<reference key="1">
    <citation type="journal article" date="1999" name="J. Cell Sci.">
        <title>mAKAP: an A-kinase anchoring protein targeted to the nuclear membrane of differentiated myocytes.</title>
        <authorList>
            <person name="Kapiloff M.S."/>
            <person name="Shillace R.V."/>
            <person name="Westphal A.M."/>
            <person name="Scott J.D."/>
        </authorList>
    </citation>
    <scope>NUCLEOTIDE SEQUENCE [MRNA]</scope>
    <source>
        <strain>Sprague-Dawley</strain>
    </source>
</reference>
<reference key="2">
    <citation type="journal article" date="2012" name="Nat. Commun.">
        <title>Quantitative maps of protein phosphorylation sites across 14 different rat organs and tissues.</title>
        <authorList>
            <person name="Lundby A."/>
            <person name="Secher A."/>
            <person name="Lage K."/>
            <person name="Nordsborg N.B."/>
            <person name="Dmytriyev A."/>
            <person name="Lundby C."/>
            <person name="Olsen J.V."/>
        </authorList>
    </citation>
    <scope>PHOSPHORYLATION [LARGE SCALE ANALYSIS] AT SER-1072; SER-1568 AND SER-1593</scope>
    <scope>IDENTIFICATION BY MASS SPECTROMETRY [LARGE SCALE ANALYSIS]</scope>
</reference>
<sequence length="2314" mass="254352">MLTMSVTLSPLRSQGPDPMATDASPMAINMTPTVEQEEGEGEEAVKAIDAEQQYGKPPPLHTAADWKIVLHLPEIETWLRMTSERVRDLTYSVQQDADSKHVDVHLVQLKDICEDISDHVEQIHALLETEFSLKLLSYSVNVIVDIHAVQLLWHQLRVSVLVLRERILQGLQDANGNYTRQTDILQAFSEETTEGRLDSLTEVDDSGQLTIKCSQDYLSLDCGITAFELSDYSPSEDLLGGLGDMTTSQAKTKSFDSWSYSEMEKEFPELIRSVGLLTVATEPVPSSCGEANEDSSQASLSDDHKGEHGEDGAPVPGQQLDSTVGMSSLDGTLANAAEHPSETAKQDSTSSPQLGAKKTQPGPCEITTPKRSIRDCFNYNEDSPTQPTLPKRGLFLKETQKNERKGSDRKGQVVDLKPELSRSTPSLVDPPDRSKLCLVLQSSYPSSPSAASQSYECLHKVGLGNLENIVRSHIKEISSSLGRLTDCHKEKLRLKKPHKTLAEVSLCRIPKQGGGSGKRSESTGSSAGPSMVSPGAPKATMRPETDSASTASGGLCHQRNRSGQLPVQSKASSSPPCSHSSESSLGSDSIKSPVPLLSKNKSQKSSPPAPCHATQNGQVVEAWYGSDEYLALPSHLKQTEVLALKLESLTKLLPQKPRGETIQDIDDWELSEMNSDSEIYPTYHIKKKHTRLGTVSPSSSSDIASSLGESIESGPLSDILSDEDLCLPLSSVKKFTDEKSERPSSSEKNESHSATRSALIQKLMHDIQHQENYEAIWERIEGFVNKLDEFIQWLNEAMETTENWTPPKAETDSLRLYLETHLSFKLNVDSHCALKEAVEEEGHQLLELVVSHKAGLKDTLRMIASQWKELQRQIKRQHSWILRALDTIKAEILATDVSVEDEEGTGSPKAEVQLCHLETQRDAVEQMSLKLYSEQYTSGSKRKEEFANMSKAHAEGSNGLLDFDSEYQELWDWLIDMESLVMDSHDLMMSEEQQQHLYKRYSVEMSIRHLKKSELLSKVEALKKGGLSLPDDILEKVDSINEKWELLGKTLREKIQDTIAGHSGSGPRDLLSPESGSLVRQLEVRIKELKRWLRDTELFIFNSCLRQEKEGTSAEKQLQYFKSLCREIKQRRRGVASILRLCQHLLDDRDTCNLNADHQPMQLIIVNLERRWEAIVMQAVQWQTRLQKKMGKESETLNVIDPGLMDLNGMSEDALEWDETDISNKLISVHEESNDLDQDPEPMLPAVKLEETHHKDSGYEEEAGDCGGSPYTSNITAPSSPHIYQVYSLHNVELHEDSHTPFLKSSPKFTGTTQPTVLTKSLSKDSSFSSTKSLPDLLGGSGLVRPYSCHSGDLSQNSGSESGIVSEGDNEMPTNSDMSLFSMVDGSPSNPETEHPDPQMGDAANVLEQKFKDNGESIKLSSVSRASVSPVGCVNGKAGDLNSVTKHTADCLGEELQGKHDVFTFYDYSYLQGSKLKLPMIMKQPQSEKAHVEDPLLGGFYFDKKSCKAKHQASESQPDAPPHERILASAPHEMGRSAYKSSDIEKTFTGIQSARQLSLLSRSSSVESLSPGGDLFGLGIFKNGSDSLQRSTSLESWLTSYKSNEDLFSCHSSGDISVSSGSVGELSKRTLDLLNRLENIQSPSEQKIKRSVSDMTLQSSSQKMPFAGQMSLDVASSINEDSPASLTELSSSDELSLCSEDIVLHKNKIPESNASFRKRLNRSVADESDVNVSMIVNVSCTSACTDDEDDSDLLSSSTLTLTEEELCLKDEDDDSSIATDDEIYEESNLMSGLDYIKNELQTWIRPKLSLTREKKRSGVTDEIKVNKDGGGNEKANPSDTLDIEALLNGSIRCLSENNGNGKTPPRTHGSGTKGENKKSTYDVSKDPHVADMENGNIESTPEREREKPQGLPEVSENLASNVKTISESELSEYEAVMDGSEDSSVARKEFCPPNDRHPPQMGPKLQHPENQSGDCKPVQNPCPGLLSEAGVGSRQDSNGLKSLPNDAPSGARKPAGCCLLEQNETEESASISSNASCCNCKPDVFHQKDDEDCSVHDFVKEIIDMASTALKSKSQPESEVAAPTSLTQIKEKVLEHSHRPIHLRKGDFYSYLSLSSHDSDCGEVTNYIDEKSSTPLPPDAVDSGLDDKEDMDCFFEACVEDEPVNEEAGLPGALPNESAIEDGAEQKSEQKTASSPVLSDKTDLVPLSGLSPQKGADDAKEGDDVSHTSQGCAESTEPTTPSGKANAEGRSRMQGVSATPEENAASAKPKIQAFSLNAKQPKGKVAMRYPSPQTLTCKEKLVNFHEDRHSNMHR</sequence>
<gene>
    <name type="primary">Akap6</name>
</gene>
<name>AKAP6_RAT</name>
<evidence type="ECO:0000250" key="1"/>
<evidence type="ECO:0000250" key="2">
    <source>
        <dbReference type="UniProtKB" id="Q13023"/>
    </source>
</evidence>
<evidence type="ECO:0000256" key="3">
    <source>
        <dbReference type="SAM" id="MobiDB-lite"/>
    </source>
</evidence>
<evidence type="ECO:0007744" key="4">
    <source>
    </source>
</evidence>
<organism>
    <name type="scientific">Rattus norvegicus</name>
    <name type="common">Rat</name>
    <dbReference type="NCBI Taxonomy" id="10116"/>
    <lineage>
        <taxon>Eukaryota</taxon>
        <taxon>Metazoa</taxon>
        <taxon>Chordata</taxon>
        <taxon>Craniata</taxon>
        <taxon>Vertebrata</taxon>
        <taxon>Euteleostomi</taxon>
        <taxon>Mammalia</taxon>
        <taxon>Eutheria</taxon>
        <taxon>Euarchontoglires</taxon>
        <taxon>Glires</taxon>
        <taxon>Rodentia</taxon>
        <taxon>Myomorpha</taxon>
        <taxon>Muroidea</taxon>
        <taxon>Muridae</taxon>
        <taxon>Murinae</taxon>
        <taxon>Rattus</taxon>
    </lineage>
</organism>